<reference key="1">
    <citation type="journal article" date="2009" name="Proc. Natl. Acad. Sci. U.S.A.">
        <title>Biogeography of the Sulfolobus islandicus pan-genome.</title>
        <authorList>
            <person name="Reno M.L."/>
            <person name="Held N.L."/>
            <person name="Fields C.J."/>
            <person name="Burke P.V."/>
            <person name="Whitaker R.J."/>
        </authorList>
    </citation>
    <scope>NUCLEOTIDE SEQUENCE [LARGE SCALE GENOMIC DNA]</scope>
    <source>
        <strain>Y.G.57.14 / Yellowstone #1</strain>
    </source>
</reference>
<evidence type="ECO:0000255" key="1">
    <source>
        <dbReference type="HAMAP-Rule" id="MF_00216"/>
    </source>
</evidence>
<proteinExistence type="inferred from homology"/>
<feature type="chain" id="PRO_1000204226" description="Translation initiation factor 1A">
    <location>
        <begin position="1"/>
        <end position="108"/>
    </location>
</feature>
<feature type="domain" description="S1-like" evidence="1">
    <location>
        <begin position="11"/>
        <end position="85"/>
    </location>
</feature>
<protein>
    <recommendedName>
        <fullName evidence="1">Translation initiation factor 1A</fullName>
        <shortName evidence="1">aIF-1A</shortName>
    </recommendedName>
</protein>
<accession>C3N8M9</accession>
<organism>
    <name type="scientific">Saccharolobus islandicus (strain Y.G.57.14 / Yellowstone #1)</name>
    <name type="common">Sulfolobus islandicus</name>
    <dbReference type="NCBI Taxonomy" id="439386"/>
    <lineage>
        <taxon>Archaea</taxon>
        <taxon>Thermoproteota</taxon>
        <taxon>Thermoprotei</taxon>
        <taxon>Sulfolobales</taxon>
        <taxon>Sulfolobaceae</taxon>
        <taxon>Saccharolobus</taxon>
    </lineage>
</organism>
<comment type="function">
    <text evidence="1">Seems to be required for maximal rate of protein biosynthesis. Enhances ribosome dissociation into subunits and stabilizes the binding of the initiator Met-tRNA(I) to 40 S ribosomal subunits.</text>
</comment>
<comment type="similarity">
    <text evidence="1">Belongs to the eIF-1A family.</text>
</comment>
<dbReference type="EMBL" id="CP001403">
    <property type="protein sequence ID" value="ACP44469.1"/>
    <property type="molecule type" value="Genomic_DNA"/>
</dbReference>
<dbReference type="RefSeq" id="WP_012710350.1">
    <property type="nucleotide sequence ID" value="NC_012622.1"/>
</dbReference>
<dbReference type="SMR" id="C3N8M9"/>
<dbReference type="KEGG" id="siy:YG5714_0176"/>
<dbReference type="HOGENOM" id="CLU_109098_1_2_2"/>
<dbReference type="Proteomes" id="UP000002308">
    <property type="component" value="Chromosome"/>
</dbReference>
<dbReference type="GO" id="GO:0003723">
    <property type="term" value="F:RNA binding"/>
    <property type="evidence" value="ECO:0007669"/>
    <property type="project" value="InterPro"/>
</dbReference>
<dbReference type="GO" id="GO:0003743">
    <property type="term" value="F:translation initiation factor activity"/>
    <property type="evidence" value="ECO:0007669"/>
    <property type="project" value="UniProtKB-UniRule"/>
</dbReference>
<dbReference type="CDD" id="cd05793">
    <property type="entry name" value="S1_IF1A"/>
    <property type="match status" value="1"/>
</dbReference>
<dbReference type="Gene3D" id="2.40.50.140">
    <property type="entry name" value="Nucleic acid-binding proteins"/>
    <property type="match status" value="1"/>
</dbReference>
<dbReference type="HAMAP" id="MF_00216">
    <property type="entry name" value="aIF_1A"/>
    <property type="match status" value="1"/>
</dbReference>
<dbReference type="InterPro" id="IPR012340">
    <property type="entry name" value="NA-bd_OB-fold"/>
</dbReference>
<dbReference type="InterPro" id="IPR006196">
    <property type="entry name" value="RNA-binding_domain_S1_IF1"/>
</dbReference>
<dbReference type="InterPro" id="IPR001253">
    <property type="entry name" value="TIF_eIF-1A"/>
</dbReference>
<dbReference type="InterPro" id="IPR018104">
    <property type="entry name" value="TIF_eIF-1A_CS"/>
</dbReference>
<dbReference type="NCBIfam" id="TIGR00523">
    <property type="entry name" value="eIF-1A"/>
    <property type="match status" value="1"/>
</dbReference>
<dbReference type="NCBIfam" id="NF003082">
    <property type="entry name" value="PRK04012.1-1"/>
    <property type="match status" value="1"/>
</dbReference>
<dbReference type="NCBIfam" id="NF003084">
    <property type="entry name" value="PRK04012.1-3"/>
    <property type="match status" value="1"/>
</dbReference>
<dbReference type="NCBIfam" id="NF003085">
    <property type="entry name" value="PRK04012.1-5"/>
    <property type="match status" value="1"/>
</dbReference>
<dbReference type="PANTHER" id="PTHR21668">
    <property type="entry name" value="EIF-1A"/>
    <property type="match status" value="1"/>
</dbReference>
<dbReference type="Pfam" id="PF01176">
    <property type="entry name" value="eIF-1a"/>
    <property type="match status" value="1"/>
</dbReference>
<dbReference type="SMART" id="SM00652">
    <property type="entry name" value="eIF1a"/>
    <property type="match status" value="1"/>
</dbReference>
<dbReference type="SUPFAM" id="SSF50249">
    <property type="entry name" value="Nucleic acid-binding proteins"/>
    <property type="match status" value="1"/>
</dbReference>
<dbReference type="PROSITE" id="PS01262">
    <property type="entry name" value="IF1A"/>
    <property type="match status" value="1"/>
</dbReference>
<dbReference type="PROSITE" id="PS50832">
    <property type="entry name" value="S1_IF1_TYPE"/>
    <property type="match status" value="1"/>
</dbReference>
<sequence>MPKKDRAQEAPSRDVPKPEEGQTICVVKKMLGGDHLVVLCMDGKERLARIPGKIRKKMWMREGDVVLVGIWDFQPNRCDILYKYGNDEIKRLVNENIISREVIDQLRG</sequence>
<gene>
    <name type="primary">eIF1A</name>
    <name type="ordered locus">YG5714_0176</name>
</gene>
<name>IF1A_SACI7</name>
<keyword id="KW-0396">Initiation factor</keyword>
<keyword id="KW-0648">Protein biosynthesis</keyword>